<comment type="function">
    <text evidence="3 7">Has alcohol dehydrogenase activity (PubMed:25312953). Has aldehyde dehydrogenase activity (By similarity). Plays a role in enhancing virulence in mice, under ethanol stress conditions, perhaps by inducing expression of pneumolysin (Ply) and increasing production of hydrogen peroxide H(2)O(2) (PubMed:25312953). May be considered a potential virulence factor (PubMed:25312953).</text>
</comment>
<comment type="catalytic activity">
    <reaction evidence="3">
        <text>an aldehyde + NAD(+) + H2O = a carboxylate + NADH + 2 H(+)</text>
        <dbReference type="Rhea" id="RHEA:16185"/>
        <dbReference type="ChEBI" id="CHEBI:15377"/>
        <dbReference type="ChEBI" id="CHEBI:15378"/>
        <dbReference type="ChEBI" id="CHEBI:17478"/>
        <dbReference type="ChEBI" id="CHEBI:29067"/>
        <dbReference type="ChEBI" id="CHEBI:57540"/>
        <dbReference type="ChEBI" id="CHEBI:57945"/>
        <dbReference type="EC" id="1.2.1.3"/>
    </reaction>
</comment>
<comment type="catalytic activity">
    <reaction evidence="7">
        <text>ethanol + NAD(+) = acetaldehyde + NADH + H(+)</text>
        <dbReference type="Rhea" id="RHEA:25290"/>
        <dbReference type="ChEBI" id="CHEBI:15343"/>
        <dbReference type="ChEBI" id="CHEBI:15378"/>
        <dbReference type="ChEBI" id="CHEBI:16236"/>
        <dbReference type="ChEBI" id="CHEBI:57540"/>
        <dbReference type="ChEBI" id="CHEBI:57945"/>
        <dbReference type="EC" id="1.1.1.1"/>
    </reaction>
</comment>
<comment type="cofactor">
    <cofactor evidence="1">
        <name>Fe(2+)</name>
        <dbReference type="ChEBI" id="CHEBI:29033"/>
    </cofactor>
</comment>
<comment type="induction">
    <text evidence="7">Up-regulated by ethanol at both the mRNA and protein levels.</text>
</comment>
<comment type="domain">
    <text evidence="1">Contains an N-terminal aldehyde dehydrogenase (ALDH) domain and a C-terminal iron-dependent alcohol dehydrogenase (ADH) domain, interconnected by a short linker.</text>
</comment>
<comment type="disruption phenotype">
    <text evidence="7 8">Disruption mutant produces significantly less acetaldehyde and NADH after ethanol treatment (PubMed:25312953). Significantly lower H(2)O(2) levels after ethanol treatment (PubMed:25312953). Decreases intracellular pneumolysin Ply level, but no effect on choline binding protein CbpA, surface adhesin A PsaA, or pyruvate oxidase SpxB (PubMed:25312953). Mutant releases 1.59-fold lower level of Ply into culture supernatant (PubMed:25312953). Significantly lower hemolytic activity in vitro (PubMed:25312953). Attenuates virulence in CD-1 / ICR strain mouse intranasal infection model (PubMed:25312953). Significantly decreases cytokine levels, e.g. TNF, IL1B and IL6, and reduces inflammation, in mice infected intranasally (PubMed:25312953).</text>
</comment>
<comment type="similarity">
    <text evidence="9">In the N-terminal section; belongs to the aldehyde dehydrogenase family.</text>
</comment>
<comment type="similarity">
    <text evidence="9">In the C-terminal section; belongs to the iron-containing alcohol dehydrogenase family.</text>
</comment>
<accession>A0A0H2ZM56</accession>
<proteinExistence type="evidence at protein level"/>
<dbReference type="EC" id="1.1.1.1" evidence="7"/>
<dbReference type="EC" id="1.2.1.3" evidence="3"/>
<dbReference type="EMBL" id="CP000410">
    <property type="protein sequence ID" value="ABJ54182.1"/>
    <property type="molecule type" value="Genomic_DNA"/>
</dbReference>
<dbReference type="RefSeq" id="WP_000763984.1">
    <property type="nucleotide sequence ID" value="NZ_JAMLJR010000015.1"/>
</dbReference>
<dbReference type="SMR" id="A0A0H2ZM56"/>
<dbReference type="PaxDb" id="373153-SPD_1834"/>
<dbReference type="KEGG" id="spd:SPD_1834"/>
<dbReference type="eggNOG" id="COG1012">
    <property type="taxonomic scope" value="Bacteria"/>
</dbReference>
<dbReference type="eggNOG" id="COG1454">
    <property type="taxonomic scope" value="Bacteria"/>
</dbReference>
<dbReference type="HOGENOM" id="CLU_007207_1_0_9"/>
<dbReference type="BioCyc" id="SPNE373153:G1G6V-1981-MONOMER"/>
<dbReference type="Proteomes" id="UP000001452">
    <property type="component" value="Chromosome"/>
</dbReference>
<dbReference type="GO" id="GO:0008774">
    <property type="term" value="F:acetaldehyde dehydrogenase (acetylating) activity"/>
    <property type="evidence" value="ECO:0007669"/>
    <property type="project" value="InterPro"/>
</dbReference>
<dbReference type="GO" id="GO:0004029">
    <property type="term" value="F:aldehyde dehydrogenase (NAD+) activity"/>
    <property type="evidence" value="ECO:0007669"/>
    <property type="project" value="RHEA"/>
</dbReference>
<dbReference type="GO" id="GO:0120542">
    <property type="term" value="F:ethanol dehydrogenase (NAD+) activity"/>
    <property type="evidence" value="ECO:0007669"/>
    <property type="project" value="RHEA"/>
</dbReference>
<dbReference type="GO" id="GO:0046872">
    <property type="term" value="F:metal ion binding"/>
    <property type="evidence" value="ECO:0007669"/>
    <property type="project" value="UniProtKB-KW"/>
</dbReference>
<dbReference type="GO" id="GO:0006066">
    <property type="term" value="P:alcohol metabolic process"/>
    <property type="evidence" value="ECO:0007669"/>
    <property type="project" value="InterPro"/>
</dbReference>
<dbReference type="GO" id="GO:0015976">
    <property type="term" value="P:carbon utilization"/>
    <property type="evidence" value="ECO:0007669"/>
    <property type="project" value="InterPro"/>
</dbReference>
<dbReference type="CDD" id="cd08178">
    <property type="entry name" value="AAD_C"/>
    <property type="match status" value="1"/>
</dbReference>
<dbReference type="CDD" id="cd07122">
    <property type="entry name" value="ALDH_F20_ACDH"/>
    <property type="match status" value="1"/>
</dbReference>
<dbReference type="FunFam" id="1.20.1090.10:FF:000001">
    <property type="entry name" value="Aldehyde-alcohol dehydrogenase"/>
    <property type="match status" value="1"/>
</dbReference>
<dbReference type="FunFam" id="3.40.309.10:FF:000007">
    <property type="entry name" value="Aldehyde-alcohol dehydrogenase"/>
    <property type="match status" value="1"/>
</dbReference>
<dbReference type="FunFam" id="3.40.50.1970:FF:000002">
    <property type="entry name" value="Aldehyde-alcohol dehydrogenase"/>
    <property type="match status" value="1"/>
</dbReference>
<dbReference type="Gene3D" id="3.40.50.1970">
    <property type="match status" value="1"/>
</dbReference>
<dbReference type="Gene3D" id="3.40.605.10">
    <property type="entry name" value="Aldehyde Dehydrogenase, Chain A, domain 1"/>
    <property type="match status" value="1"/>
</dbReference>
<dbReference type="Gene3D" id="3.40.309.10">
    <property type="entry name" value="Aldehyde Dehydrogenase, Chain A, domain 2"/>
    <property type="match status" value="1"/>
</dbReference>
<dbReference type="Gene3D" id="1.20.1090.10">
    <property type="entry name" value="Dehydroquinate synthase-like - alpha domain"/>
    <property type="match status" value="1"/>
</dbReference>
<dbReference type="InterPro" id="IPR034789">
    <property type="entry name" value="AAD_C"/>
</dbReference>
<dbReference type="InterPro" id="IPR001670">
    <property type="entry name" value="ADH_Fe/GldA"/>
</dbReference>
<dbReference type="InterPro" id="IPR056798">
    <property type="entry name" value="ADH_Fe_C"/>
</dbReference>
<dbReference type="InterPro" id="IPR018211">
    <property type="entry name" value="ADH_Fe_CS"/>
</dbReference>
<dbReference type="InterPro" id="IPR039697">
    <property type="entry name" value="Alcohol_dehydrogenase_Fe"/>
</dbReference>
<dbReference type="InterPro" id="IPR016161">
    <property type="entry name" value="Ald_DH/histidinol_DH"/>
</dbReference>
<dbReference type="InterPro" id="IPR016163">
    <property type="entry name" value="Ald_DH_C"/>
</dbReference>
<dbReference type="InterPro" id="IPR016162">
    <property type="entry name" value="Ald_DH_N"/>
</dbReference>
<dbReference type="InterPro" id="IPR015590">
    <property type="entry name" value="Aldehyde_DH_dom"/>
</dbReference>
<dbReference type="InterPro" id="IPR012079">
    <property type="entry name" value="Bifunc_Ald-ADH"/>
</dbReference>
<dbReference type="NCBIfam" id="NF010378">
    <property type="entry name" value="PRK13805.1"/>
    <property type="match status" value="1"/>
</dbReference>
<dbReference type="PANTHER" id="PTHR11496">
    <property type="entry name" value="ALCOHOL DEHYDROGENASE"/>
    <property type="match status" value="1"/>
</dbReference>
<dbReference type="PANTHER" id="PTHR11496:SF83">
    <property type="entry name" value="HYDROXYACID-OXOACID TRANSHYDROGENASE, MITOCHONDRIAL"/>
    <property type="match status" value="1"/>
</dbReference>
<dbReference type="Pfam" id="PF25137">
    <property type="entry name" value="ADH_Fe_C"/>
    <property type="match status" value="1"/>
</dbReference>
<dbReference type="Pfam" id="PF00171">
    <property type="entry name" value="Aldedh"/>
    <property type="match status" value="1"/>
</dbReference>
<dbReference type="Pfam" id="PF00465">
    <property type="entry name" value="Fe-ADH"/>
    <property type="match status" value="1"/>
</dbReference>
<dbReference type="PIRSF" id="PIRSF000111">
    <property type="entry name" value="ALDH_ADH"/>
    <property type="match status" value="1"/>
</dbReference>
<dbReference type="SUPFAM" id="SSF53720">
    <property type="entry name" value="ALDH-like"/>
    <property type="match status" value="1"/>
</dbReference>
<dbReference type="SUPFAM" id="SSF56796">
    <property type="entry name" value="Dehydroquinate synthase-like"/>
    <property type="match status" value="1"/>
</dbReference>
<dbReference type="PROSITE" id="PS00913">
    <property type="entry name" value="ADH_IRON_1"/>
    <property type="match status" value="1"/>
</dbReference>
<dbReference type="PROSITE" id="PS00060">
    <property type="entry name" value="ADH_IRON_2"/>
    <property type="match status" value="1"/>
</dbReference>
<evidence type="ECO:0000250" key="1">
    <source>
        <dbReference type="UniProtKB" id="P0A9Q7"/>
    </source>
</evidence>
<evidence type="ECO:0000250" key="2">
    <source>
        <dbReference type="UniProtKB" id="P0A9Q8"/>
    </source>
</evidence>
<evidence type="ECO:0000250" key="3">
    <source>
        <dbReference type="UniProtKB" id="P33744"/>
    </source>
</evidence>
<evidence type="ECO:0000250" key="4">
    <source>
        <dbReference type="UniProtKB" id="Q9HTJ1"/>
    </source>
</evidence>
<evidence type="ECO:0000255" key="5"/>
<evidence type="ECO:0000255" key="6">
    <source>
        <dbReference type="PIRNR" id="PIRNR000111"/>
    </source>
</evidence>
<evidence type="ECO:0000269" key="7">
    <source>
    </source>
</evidence>
<evidence type="ECO:0000303" key="8">
    <source>
    </source>
</evidence>
<evidence type="ECO:0000305" key="9"/>
<evidence type="ECO:0000312" key="10">
    <source>
        <dbReference type="EMBL" id="ABJ54182.1"/>
    </source>
</evidence>
<evidence type="ECO:0000312" key="11">
    <source>
        <dbReference type="Proteomes" id="UP000001452"/>
    </source>
</evidence>
<feature type="chain" id="PRO_0000458483" description="Aldehyde-alcohol dehydrogenase">
    <location>
        <begin position="1"/>
        <end position="883"/>
    </location>
</feature>
<feature type="region of interest" description="Aldehyde dehydrogenase" evidence="1">
    <location>
        <begin position="13"/>
        <end position="456"/>
    </location>
</feature>
<feature type="region of interest" description="Linker" evidence="1">
    <location>
        <begin position="457"/>
        <end position="464"/>
    </location>
</feature>
<feature type="active site" description="Nucleophile" evidence="4">
    <location>
        <position position="257"/>
    </location>
</feature>
<feature type="binding site" evidence="1">
    <location>
        <begin position="121"/>
        <end position="126"/>
    </location>
    <ligand>
        <name>NAD(+)</name>
        <dbReference type="ChEBI" id="CHEBI:57540"/>
        <label>1</label>
    </ligand>
</feature>
<feature type="binding site" evidence="1">
    <location>
        <position position="206"/>
    </location>
    <ligand>
        <name>NAD(+)</name>
        <dbReference type="ChEBI" id="CHEBI:57540"/>
        <label>1</label>
    </ligand>
</feature>
<feature type="binding site" evidence="1">
    <location>
        <position position="224"/>
    </location>
    <ligand>
        <name>NAD(+)</name>
        <dbReference type="ChEBI" id="CHEBI:57540"/>
        <label>1</label>
    </ligand>
</feature>
<feature type="binding site" evidence="1">
    <location>
        <position position="355"/>
    </location>
    <ligand>
        <name>NAD(+)</name>
        <dbReference type="ChEBI" id="CHEBI:57540"/>
        <label>1</label>
    </ligand>
</feature>
<feature type="binding site" evidence="1">
    <location>
        <position position="435"/>
    </location>
    <ligand>
        <name>NAD(+)</name>
        <dbReference type="ChEBI" id="CHEBI:57540"/>
        <label>1</label>
    </ligand>
</feature>
<feature type="binding site" evidence="5">
    <location>
        <begin position="438"/>
        <end position="443"/>
    </location>
    <ligand>
        <name>NAD(+)</name>
        <dbReference type="ChEBI" id="CHEBI:57540"/>
    </ligand>
</feature>
<feature type="binding site" evidence="2">
    <location>
        <position position="500"/>
    </location>
    <ligand>
        <name>NAD(+)</name>
        <dbReference type="ChEBI" id="CHEBI:57540"/>
        <label>2</label>
    </ligand>
</feature>
<feature type="binding site" evidence="2">
    <location>
        <position position="534"/>
    </location>
    <ligand>
        <name>NAD(+)</name>
        <dbReference type="ChEBI" id="CHEBI:57540"/>
        <label>2</label>
    </ligand>
</feature>
<feature type="binding site" evidence="2">
    <location>
        <begin position="561"/>
        <end position="565"/>
    </location>
    <ligand>
        <name>NAD(+)</name>
        <dbReference type="ChEBI" id="CHEBI:57540"/>
        <label>2</label>
    </ligand>
</feature>
<feature type="binding site" evidence="2">
    <location>
        <begin position="612"/>
        <end position="613"/>
    </location>
    <ligand>
        <name>NAD(+)</name>
        <dbReference type="ChEBI" id="CHEBI:57540"/>
        <label>2</label>
    </ligand>
</feature>
<feature type="binding site" evidence="1">
    <location>
        <position position="625"/>
    </location>
    <ligand>
        <name>NAD(+)</name>
        <dbReference type="ChEBI" id="CHEBI:57540"/>
        <label>2</label>
    </ligand>
</feature>
<feature type="binding site" evidence="1">
    <location>
        <position position="634"/>
    </location>
    <ligand>
        <name>NAD(+)</name>
        <dbReference type="ChEBI" id="CHEBI:57540"/>
        <label>2</label>
    </ligand>
</feature>
<feature type="binding site" evidence="2">
    <location>
        <position position="653"/>
    </location>
    <ligand>
        <name>NAD(+)</name>
        <dbReference type="ChEBI" id="CHEBI:57540"/>
        <label>2</label>
    </ligand>
</feature>
<feature type="binding site" evidence="2">
    <location>
        <position position="668"/>
    </location>
    <ligand>
        <name>Fe cation</name>
        <dbReference type="ChEBI" id="CHEBI:24875"/>
    </ligand>
</feature>
<feature type="binding site" evidence="2">
    <location>
        <position position="672"/>
    </location>
    <ligand>
        <name>Fe cation</name>
        <dbReference type="ChEBI" id="CHEBI:24875"/>
    </ligand>
</feature>
<feature type="binding site" evidence="2">
    <location>
        <position position="736"/>
    </location>
    <ligand>
        <name>Fe cation</name>
        <dbReference type="ChEBI" id="CHEBI:24875"/>
    </ligand>
</feature>
<feature type="binding site" evidence="2">
    <location>
        <position position="750"/>
    </location>
    <ligand>
        <name>Fe cation</name>
        <dbReference type="ChEBI" id="CHEBI:24875"/>
    </ligand>
</feature>
<protein>
    <recommendedName>
        <fullName evidence="6 8">Aldehyde-alcohol dehydrogenase</fullName>
    </recommendedName>
    <domain>
        <recommendedName>
            <fullName evidence="8">Alcohol dehydrogenase</fullName>
            <shortName evidence="8">ADH</shortName>
            <ecNumber evidence="7">1.1.1.1</ecNumber>
        </recommendedName>
    </domain>
    <domain>
        <recommendedName>
            <fullName evidence="3">Aldehyde dehydrogenase</fullName>
            <shortName evidence="3">ALDH</shortName>
            <ecNumber evidence="3">1.2.1.3</ecNumber>
        </recommendedName>
    </domain>
</protein>
<organism evidence="11">
    <name type="scientific">Streptococcus pneumoniae serotype 2 (strain D39 / NCTC 7466)</name>
    <dbReference type="NCBI Taxonomy" id="373153"/>
    <lineage>
        <taxon>Bacteria</taxon>
        <taxon>Bacillati</taxon>
        <taxon>Bacillota</taxon>
        <taxon>Bacilli</taxon>
        <taxon>Lactobacillales</taxon>
        <taxon>Streptococcaceae</taxon>
        <taxon>Streptococcus</taxon>
    </lineage>
</organism>
<gene>
    <name evidence="8" type="primary">adhE</name>
    <name evidence="10" type="ordered locus">SPD_1834</name>
</gene>
<reference evidence="11" key="1">
    <citation type="journal article" date="2007" name="J. Bacteriol.">
        <title>Genome sequence of Avery's virulent serotype 2 strain D39 of Streptococcus pneumoniae and comparison with that of unencapsulated laboratory strain R6.</title>
        <authorList>
            <person name="Lanie J.A."/>
            <person name="Ng W.-L."/>
            <person name="Kazmierczak K.M."/>
            <person name="Andrzejewski T.M."/>
            <person name="Davidsen T.M."/>
            <person name="Wayne K.J."/>
            <person name="Tettelin H."/>
            <person name="Glass J.I."/>
            <person name="Winkler M.E."/>
        </authorList>
    </citation>
    <scope>NUCLEOTIDE SEQUENCE [LARGE SCALE GENOMIC DNA]</scope>
    <source>
        <strain evidence="11">D39 / NCTC 7466</strain>
    </source>
</reference>
<reference evidence="9" key="2">
    <citation type="journal article" date="2015" name="Infect. Immun.">
        <title>Ethanol-induced alcohol dehydrogenase E (AdhE) potentiates pneumolysin in Streptococcus pneumoniae.</title>
        <authorList>
            <person name="Luong T.T."/>
            <person name="Kim E.H."/>
            <person name="Bak J.P."/>
            <person name="Nguyen C.T."/>
            <person name="Choi S."/>
            <person name="Briles D.E."/>
            <person name="Pyo S."/>
            <person name="Rhee D.K."/>
        </authorList>
    </citation>
    <scope>FUNCTION</scope>
    <scope>CATALYTIC ACTIVITY</scope>
    <scope>INDUCTION</scope>
    <scope>DISRUPTION PHENOTYPE</scope>
</reference>
<keyword id="KW-0408">Iron</keyword>
<keyword id="KW-0479">Metal-binding</keyword>
<keyword id="KW-0511">Multifunctional enzyme</keyword>
<keyword id="KW-0520">NAD</keyword>
<keyword id="KW-0560">Oxidoreductase</keyword>
<keyword id="KW-1185">Reference proteome</keyword>
<keyword id="KW-0843">Virulence</keyword>
<name>ADHE_STRP2</name>
<sequence>MADKKTVTPEEKKLVAEKHVDELVQKALVALEEMRKLNQEQVDYIVAKASVAALDAHGELALHAFEETGRGVFEDKATKNLFACEHVVNNMRHTKTVGVIEEDDVTGLTLIAEPVGVVCGITPTTNPTSTAIFKSLISLKTRNPIVFAFHPSAQESSAHAARIVRDAAIAAGAPENCVQWITQPSMEATSALMNHEGVATILATGGNAMVKAAYSCGKPALGVGAGNVPAYVEKSANIRQAAHDIVMSKSFDNGMVCASEQAVIIDKEIYDEFVAEFKSYHTYFVNKKEKALLEEFCFGVKANSKNCAGAKLNADIVGKPATWIAEQAGFTVPEGTNILAAECKEVGENEPLTREKLSPVIAVLKSESREDGITKARQMVEFNGLGHSAAIHTADEELTKEFGKAVKAIRVICNSPSTFGGIGDVYNAFLPSLTLGCGSYGRNSVGDNVSAINLLNIKKVGRRRNNMQWMKLPSKTYFERDSIQYLQKCRDVERVMIVTDHAMVELGFLDRIIEQLDLRRNKVVYQIFADVEPDPDITTVNRGTEIMRAFKPDTIIALGGGSPMDAAKVMWLFYEQPEVDFRDLVQKFMDIRKRAFKFPLLGKKTKFIAIPTTSGTGSEVTPFAVISDKANNRKYPIADYSLTPTVAIVDPALVLTVPGFVAADTGMDVLTHATEAYVSQMASDYTDGLALQAIKLVFENLESSVKNADFHSREKMHNASTIAGMAFANAFLGISHSMAHKIGAQFHTIHGRTNAILLPYVIRYNGTRPAKTATWPKYNYYRADEKYQDIARMLGLPASTPEEGVESYAKAVYELGERIGIQMNFRDQGIDEKEWKEHSRELAFLAYEDQCSPANPRLPMVDHMQEIIEDAYYGYKERPGRRK</sequence>